<sequence length="174" mass="19962">MQQALFGGGCFWCVEAVFLQIRGVEKVTSGYAGGHTTHPTYEQVCQGDTQHAEVVLIDFDEQQVTYSQLLDVFFATHDPTTLNRQGNDIGTQYRSVIYYFNEEQKQAAEHTIQTLKDDDLDIVTELSPAPTFYPAEDYHQNYYEKNPSQGYCNFAIPPKLLKLYSKFQHLMKDQ</sequence>
<gene>
    <name evidence="1" type="primary">msrA</name>
    <name type="ordered locus">ABSDF3055</name>
</gene>
<evidence type="ECO:0000255" key="1">
    <source>
        <dbReference type="HAMAP-Rule" id="MF_01401"/>
    </source>
</evidence>
<feature type="chain" id="PRO_1000145391" description="Peptide methionine sulfoxide reductase MsrA">
    <location>
        <begin position="1"/>
        <end position="174"/>
    </location>
</feature>
<feature type="active site" evidence="1">
    <location>
        <position position="10"/>
    </location>
</feature>
<comment type="function">
    <text evidence="1">Has an important function as a repair enzyme for proteins that have been inactivated by oxidation. Catalyzes the reversible oxidation-reduction of methionine sulfoxide in proteins to methionine.</text>
</comment>
<comment type="catalytic activity">
    <reaction evidence="1">
        <text>L-methionyl-[protein] + [thioredoxin]-disulfide + H2O = L-methionyl-(S)-S-oxide-[protein] + [thioredoxin]-dithiol</text>
        <dbReference type="Rhea" id="RHEA:14217"/>
        <dbReference type="Rhea" id="RHEA-COMP:10698"/>
        <dbReference type="Rhea" id="RHEA-COMP:10700"/>
        <dbReference type="Rhea" id="RHEA-COMP:12313"/>
        <dbReference type="Rhea" id="RHEA-COMP:12315"/>
        <dbReference type="ChEBI" id="CHEBI:15377"/>
        <dbReference type="ChEBI" id="CHEBI:16044"/>
        <dbReference type="ChEBI" id="CHEBI:29950"/>
        <dbReference type="ChEBI" id="CHEBI:44120"/>
        <dbReference type="ChEBI" id="CHEBI:50058"/>
        <dbReference type="EC" id="1.8.4.11"/>
    </reaction>
</comment>
<comment type="catalytic activity">
    <reaction evidence="1">
        <text>[thioredoxin]-disulfide + L-methionine + H2O = L-methionine (S)-S-oxide + [thioredoxin]-dithiol</text>
        <dbReference type="Rhea" id="RHEA:19993"/>
        <dbReference type="Rhea" id="RHEA-COMP:10698"/>
        <dbReference type="Rhea" id="RHEA-COMP:10700"/>
        <dbReference type="ChEBI" id="CHEBI:15377"/>
        <dbReference type="ChEBI" id="CHEBI:29950"/>
        <dbReference type="ChEBI" id="CHEBI:50058"/>
        <dbReference type="ChEBI" id="CHEBI:57844"/>
        <dbReference type="ChEBI" id="CHEBI:58772"/>
        <dbReference type="EC" id="1.8.4.11"/>
    </reaction>
</comment>
<comment type="similarity">
    <text evidence="1">Belongs to the MsrA Met sulfoxide reductase family.</text>
</comment>
<organism>
    <name type="scientific">Acinetobacter baumannii (strain SDF)</name>
    <dbReference type="NCBI Taxonomy" id="509170"/>
    <lineage>
        <taxon>Bacteria</taxon>
        <taxon>Pseudomonadati</taxon>
        <taxon>Pseudomonadota</taxon>
        <taxon>Gammaproteobacteria</taxon>
        <taxon>Moraxellales</taxon>
        <taxon>Moraxellaceae</taxon>
        <taxon>Acinetobacter</taxon>
        <taxon>Acinetobacter calcoaceticus/baumannii complex</taxon>
    </lineage>
</organism>
<keyword id="KW-0560">Oxidoreductase</keyword>
<proteinExistence type="inferred from homology"/>
<name>MSRA_ACIBS</name>
<reference key="1">
    <citation type="journal article" date="2008" name="PLoS ONE">
        <title>Comparative analysis of Acinetobacters: three genomes for three lifestyles.</title>
        <authorList>
            <person name="Vallenet D."/>
            <person name="Nordmann P."/>
            <person name="Barbe V."/>
            <person name="Poirel L."/>
            <person name="Mangenot S."/>
            <person name="Bataille E."/>
            <person name="Dossat C."/>
            <person name="Gas S."/>
            <person name="Kreimeyer A."/>
            <person name="Lenoble P."/>
            <person name="Oztas S."/>
            <person name="Poulain J."/>
            <person name="Segurens B."/>
            <person name="Robert C."/>
            <person name="Abergel C."/>
            <person name="Claverie J.-M."/>
            <person name="Raoult D."/>
            <person name="Medigue C."/>
            <person name="Weissenbach J."/>
            <person name="Cruveiller S."/>
        </authorList>
    </citation>
    <scope>NUCLEOTIDE SEQUENCE [LARGE SCALE GENOMIC DNA]</scope>
    <source>
        <strain>SDF</strain>
    </source>
</reference>
<protein>
    <recommendedName>
        <fullName evidence="1">Peptide methionine sulfoxide reductase MsrA</fullName>
        <shortName evidence="1">Protein-methionine-S-oxide reductase</shortName>
        <ecNumber evidence="1">1.8.4.11</ecNumber>
    </recommendedName>
    <alternativeName>
        <fullName evidence="1">Peptide-methionine (S)-S-oxide reductase</fullName>
        <shortName evidence="1">Peptide Met(O) reductase</shortName>
    </alternativeName>
</protein>
<dbReference type="EC" id="1.8.4.11" evidence="1"/>
<dbReference type="EMBL" id="CU468230">
    <property type="protein sequence ID" value="CAP02340.1"/>
    <property type="molecule type" value="Genomic_DNA"/>
</dbReference>
<dbReference type="SMR" id="B0VL72"/>
<dbReference type="KEGG" id="abm:ABSDF3055"/>
<dbReference type="HOGENOM" id="CLU_031040_10_0_6"/>
<dbReference type="Proteomes" id="UP000001741">
    <property type="component" value="Chromosome"/>
</dbReference>
<dbReference type="GO" id="GO:0033744">
    <property type="term" value="F:L-methionine:thioredoxin-disulfide S-oxidoreductase activity"/>
    <property type="evidence" value="ECO:0007669"/>
    <property type="project" value="RHEA"/>
</dbReference>
<dbReference type="GO" id="GO:0008113">
    <property type="term" value="F:peptide-methionine (S)-S-oxide reductase activity"/>
    <property type="evidence" value="ECO:0007669"/>
    <property type="project" value="UniProtKB-UniRule"/>
</dbReference>
<dbReference type="GO" id="GO:0036211">
    <property type="term" value="P:protein modification process"/>
    <property type="evidence" value="ECO:0007669"/>
    <property type="project" value="UniProtKB-UniRule"/>
</dbReference>
<dbReference type="Gene3D" id="3.30.1060.10">
    <property type="entry name" value="Peptide methionine sulphoxide reductase MsrA"/>
    <property type="match status" value="1"/>
</dbReference>
<dbReference type="HAMAP" id="MF_01401">
    <property type="entry name" value="MsrA"/>
    <property type="match status" value="1"/>
</dbReference>
<dbReference type="InterPro" id="IPR002569">
    <property type="entry name" value="Met_Sox_Rdtase_MsrA_dom"/>
</dbReference>
<dbReference type="InterPro" id="IPR036509">
    <property type="entry name" value="Met_Sox_Rdtase_MsrA_sf"/>
</dbReference>
<dbReference type="NCBIfam" id="TIGR00401">
    <property type="entry name" value="msrA"/>
    <property type="match status" value="1"/>
</dbReference>
<dbReference type="PANTHER" id="PTHR43774">
    <property type="entry name" value="PEPTIDE METHIONINE SULFOXIDE REDUCTASE"/>
    <property type="match status" value="1"/>
</dbReference>
<dbReference type="PANTHER" id="PTHR43774:SF1">
    <property type="entry name" value="PEPTIDE METHIONINE SULFOXIDE REDUCTASE MSRA 2"/>
    <property type="match status" value="1"/>
</dbReference>
<dbReference type="Pfam" id="PF01625">
    <property type="entry name" value="PMSR"/>
    <property type="match status" value="1"/>
</dbReference>
<dbReference type="SUPFAM" id="SSF55068">
    <property type="entry name" value="Peptide methionine sulfoxide reductase"/>
    <property type="match status" value="1"/>
</dbReference>
<accession>B0VL72</accession>